<organism>
    <name type="scientific">Escherichia coli (strain K12)</name>
    <dbReference type="NCBI Taxonomy" id="83333"/>
    <lineage>
        <taxon>Bacteria</taxon>
        <taxon>Pseudomonadati</taxon>
        <taxon>Pseudomonadota</taxon>
        <taxon>Gammaproteobacteria</taxon>
        <taxon>Enterobacterales</taxon>
        <taxon>Enterobacteriaceae</taxon>
        <taxon>Escherichia</taxon>
    </lineage>
</organism>
<comment type="subcellular location">
    <subcellularLocation>
        <location>Cell inner membrane</location>
        <topology>Multi-pass membrane protein</topology>
    </subcellularLocation>
</comment>
<comment type="similarity">
    <text evidence="2">Belongs to the major facilitator superfamily. Sugar transporter (TC 2.A.1.1) family.</text>
</comment>
<gene>
    <name type="primary">ydjE</name>
    <name type="ordered locus">b1769</name>
    <name type="ordered locus">JW1758</name>
</gene>
<feature type="chain" id="PRO_0000050484" description="Inner membrane metabolite transport protein YdjE">
    <location>
        <begin position="1"/>
        <end position="452"/>
    </location>
</feature>
<feature type="topological domain" description="Cytoplasmic" evidence="1">
    <location>
        <begin position="1"/>
        <end position="20"/>
    </location>
</feature>
<feature type="transmembrane region" description="Helical; Name=1" evidence="1">
    <location>
        <begin position="21"/>
        <end position="43"/>
    </location>
</feature>
<feature type="topological domain" description="Periplasmic" evidence="1">
    <location>
        <begin position="44"/>
        <end position="57"/>
    </location>
</feature>
<feature type="transmembrane region" description="Helical; Name=2" evidence="1">
    <location>
        <begin position="58"/>
        <end position="80"/>
    </location>
</feature>
<feature type="topological domain" description="Cytoplasmic" evidence="1">
    <location>
        <begin position="81"/>
        <end position="91"/>
    </location>
</feature>
<feature type="transmembrane region" description="Helical; Name=3" evidence="1">
    <location>
        <begin position="92"/>
        <end position="114"/>
    </location>
</feature>
<feature type="topological domain" description="Periplasmic" evidence="1">
    <location>
        <begin position="115"/>
        <end position="117"/>
    </location>
</feature>
<feature type="transmembrane region" description="Helical; Name=4" evidence="1">
    <location>
        <begin position="118"/>
        <end position="140"/>
    </location>
</feature>
<feature type="topological domain" description="Cytoplasmic" evidence="1">
    <location>
        <begin position="141"/>
        <end position="152"/>
    </location>
</feature>
<feature type="transmembrane region" description="Helical; Name=5" evidence="1">
    <location>
        <begin position="153"/>
        <end position="175"/>
    </location>
</feature>
<feature type="topological domain" description="Periplasmic" evidence="1">
    <location>
        <begin position="176"/>
        <end position="178"/>
    </location>
</feature>
<feature type="transmembrane region" description="Helical; Name=6" evidence="1">
    <location>
        <begin position="179"/>
        <end position="198"/>
    </location>
</feature>
<feature type="topological domain" description="Cytoplasmic" evidence="1">
    <location>
        <begin position="199"/>
        <end position="265"/>
    </location>
</feature>
<feature type="transmembrane region" description="Helical; Name=7" evidence="1">
    <location>
        <begin position="266"/>
        <end position="288"/>
    </location>
</feature>
<feature type="topological domain" description="Periplasmic" evidence="1">
    <location>
        <begin position="289"/>
        <end position="297"/>
    </location>
</feature>
<feature type="transmembrane region" description="Helical; Name=8" evidence="1">
    <location>
        <begin position="298"/>
        <end position="320"/>
    </location>
</feature>
<feature type="topological domain" description="Cytoplasmic" evidence="1">
    <location>
        <begin position="321"/>
        <end position="326"/>
    </location>
</feature>
<feature type="transmembrane region" description="Helical; Name=9" evidence="1">
    <location>
        <begin position="327"/>
        <end position="344"/>
    </location>
</feature>
<feature type="topological domain" description="Periplasmic" evidence="1">
    <location>
        <begin position="345"/>
        <end position="353"/>
    </location>
</feature>
<feature type="transmembrane region" description="Helical; Name=10" evidence="1">
    <location>
        <begin position="354"/>
        <end position="376"/>
    </location>
</feature>
<feature type="topological domain" description="Cytoplasmic" evidence="1">
    <location>
        <begin position="377"/>
        <end position="388"/>
    </location>
</feature>
<feature type="transmembrane region" description="Helical; Name=11" evidence="1">
    <location>
        <begin position="389"/>
        <end position="411"/>
    </location>
</feature>
<feature type="topological domain" description="Periplasmic" evidence="1">
    <location>
        <begin position="412"/>
        <end position="415"/>
    </location>
</feature>
<feature type="transmembrane region" description="Helical; Name=12" evidence="1">
    <location>
        <begin position="416"/>
        <end position="438"/>
    </location>
</feature>
<feature type="topological domain" description="Cytoplasmic" evidence="1">
    <location>
        <begin position="439"/>
        <end position="452"/>
    </location>
</feature>
<keyword id="KW-0997">Cell inner membrane</keyword>
<keyword id="KW-1003">Cell membrane</keyword>
<keyword id="KW-0472">Membrane</keyword>
<keyword id="KW-1185">Reference proteome</keyword>
<keyword id="KW-0812">Transmembrane</keyword>
<keyword id="KW-1133">Transmembrane helix</keyword>
<keyword id="KW-0813">Transport</keyword>
<reference key="1">
    <citation type="journal article" date="1996" name="DNA Res.">
        <title>A 570-kb DNA sequence of the Escherichia coli K-12 genome corresponding to the 28.0-40.1 min region on the linkage map.</title>
        <authorList>
            <person name="Aiba H."/>
            <person name="Baba T."/>
            <person name="Fujita K."/>
            <person name="Hayashi K."/>
            <person name="Inada T."/>
            <person name="Isono K."/>
            <person name="Itoh T."/>
            <person name="Kasai H."/>
            <person name="Kashimoto K."/>
            <person name="Kimura S."/>
            <person name="Kitakawa M."/>
            <person name="Kitagawa M."/>
            <person name="Makino K."/>
            <person name="Miki T."/>
            <person name="Mizobuchi K."/>
            <person name="Mori H."/>
            <person name="Mori T."/>
            <person name="Motomura K."/>
            <person name="Nakade S."/>
            <person name="Nakamura Y."/>
            <person name="Nashimoto H."/>
            <person name="Nishio Y."/>
            <person name="Oshima T."/>
            <person name="Saito N."/>
            <person name="Sampei G."/>
            <person name="Seki Y."/>
            <person name="Sivasundaram S."/>
            <person name="Tagami H."/>
            <person name="Takeda J."/>
            <person name="Takemoto K."/>
            <person name="Takeuchi Y."/>
            <person name="Wada C."/>
            <person name="Yamamoto Y."/>
            <person name="Horiuchi T."/>
        </authorList>
    </citation>
    <scope>NUCLEOTIDE SEQUENCE [LARGE SCALE GENOMIC DNA]</scope>
    <source>
        <strain>K12 / W3110 / ATCC 27325 / DSM 5911</strain>
    </source>
</reference>
<reference key="2">
    <citation type="journal article" date="1997" name="Science">
        <title>The complete genome sequence of Escherichia coli K-12.</title>
        <authorList>
            <person name="Blattner F.R."/>
            <person name="Plunkett G. III"/>
            <person name="Bloch C.A."/>
            <person name="Perna N.T."/>
            <person name="Burland V."/>
            <person name="Riley M."/>
            <person name="Collado-Vides J."/>
            <person name="Glasner J.D."/>
            <person name="Rode C.K."/>
            <person name="Mayhew G.F."/>
            <person name="Gregor J."/>
            <person name="Davis N.W."/>
            <person name="Kirkpatrick H.A."/>
            <person name="Goeden M.A."/>
            <person name="Rose D.J."/>
            <person name="Mau B."/>
            <person name="Shao Y."/>
        </authorList>
    </citation>
    <scope>NUCLEOTIDE SEQUENCE [LARGE SCALE GENOMIC DNA]</scope>
    <source>
        <strain>K12 / MG1655 / ATCC 47076</strain>
    </source>
</reference>
<reference key="3">
    <citation type="journal article" date="2006" name="Mol. Syst. Biol.">
        <title>Highly accurate genome sequences of Escherichia coli K-12 strains MG1655 and W3110.</title>
        <authorList>
            <person name="Hayashi K."/>
            <person name="Morooka N."/>
            <person name="Yamamoto Y."/>
            <person name="Fujita K."/>
            <person name="Isono K."/>
            <person name="Choi S."/>
            <person name="Ohtsubo E."/>
            <person name="Baba T."/>
            <person name="Wanner B.L."/>
            <person name="Mori H."/>
            <person name="Horiuchi T."/>
        </authorList>
    </citation>
    <scope>NUCLEOTIDE SEQUENCE [LARGE SCALE GENOMIC DNA]</scope>
    <source>
        <strain>K12 / W3110 / ATCC 27325 / DSM 5911</strain>
    </source>
</reference>
<reference key="4">
    <citation type="journal article" date="1989" name="Gene">
        <title>Structure and expression in Escherichia coli K-12 of the L-asparaginase I-encoding ansA gene and its flanking regions.</title>
        <authorList>
            <person name="Jerlstroem P.G."/>
            <person name="Bezjak D.A."/>
            <person name="Jennings M.P."/>
            <person name="Beacham I.R."/>
        </authorList>
    </citation>
    <scope>NUCLEOTIDE SEQUENCE [GENOMIC DNA] OF 360-452</scope>
    <source>
        <strain>K12</strain>
    </source>
</reference>
<reference key="5">
    <citation type="journal article" date="1994" name="Nucleic Acids Res.">
        <title>Intrinsic and extrinsic approaches for detecting genes in a bacterial genome.</title>
        <authorList>
            <person name="Borodovsky M."/>
            <person name="Rudd K.E."/>
            <person name="Koonin E.V."/>
        </authorList>
    </citation>
    <scope>IDENTIFICATION</scope>
</reference>
<reference key="6">
    <citation type="journal article" date="2005" name="Science">
        <title>Global topology analysis of the Escherichia coli inner membrane proteome.</title>
        <authorList>
            <person name="Daley D.O."/>
            <person name="Rapp M."/>
            <person name="Granseth E."/>
            <person name="Melen K."/>
            <person name="Drew D."/>
            <person name="von Heijne G."/>
        </authorList>
    </citation>
    <scope>TOPOLOGY [LARGE SCALE ANALYSIS]</scope>
    <source>
        <strain>K12 / MG1655 / ATCC 47076</strain>
    </source>
</reference>
<sequence>MEQYDQIGARLDRLPLARFHYRIFGIISFSLLLTGFLSYSGNVVLAKLVSNGWSNNFLNAAFTSALMFGYFIGSLTGGFIGDYFGRRRAFRINLLIVGIAATGAAFVPDMYWLIFFRFLMGTGMGALIMVGYASFTEFIPATVRGKWSARLSFVGNWSPMLSAAIGVVVIAFFSWRIMFLLGGIGILLAWFLSGKYFIESPRWLAGKGQIAGAECQLREVEQQIEREKSIRLPPLTSYQSNSKVKVIKGTFWLLFKGEMLRRTLVAITVLIAMNISLYTITVWIPTIFVNSGIDVDKSILMTAVIMIGAPVGIFIAALIIDHFPRRLFGSTLLIIIAVLGYIYSIQTTEWAILIYGLVMIFFLYMYVCFASAVYIPELWPTHLRLRGSGFVNAVGRIVAVFTPYGVAALLTHYGSITVFMVLGVMLLLCALVLSIFGIETRKVSLEEISEVN</sequence>
<dbReference type="EMBL" id="U00096">
    <property type="protein sequence ID" value="AAC74839.1"/>
    <property type="molecule type" value="Genomic_DNA"/>
</dbReference>
<dbReference type="EMBL" id="AP009048">
    <property type="protein sequence ID" value="BAA15560.1"/>
    <property type="molecule type" value="Genomic_DNA"/>
</dbReference>
<dbReference type="EMBL" id="M26934">
    <property type="status" value="NOT_ANNOTATED_CDS"/>
    <property type="molecule type" value="Genomic_DNA"/>
</dbReference>
<dbReference type="PIR" id="A64937">
    <property type="entry name" value="A64937"/>
</dbReference>
<dbReference type="RefSeq" id="NP_416283.1">
    <property type="nucleotide sequence ID" value="NC_000913.3"/>
</dbReference>
<dbReference type="RefSeq" id="WP_000438807.1">
    <property type="nucleotide sequence ID" value="NZ_SSZK01000001.1"/>
</dbReference>
<dbReference type="SMR" id="P38055"/>
<dbReference type="BioGRID" id="4259142">
    <property type="interactions" value="243"/>
</dbReference>
<dbReference type="FunCoup" id="P38055">
    <property type="interactions" value="340"/>
</dbReference>
<dbReference type="STRING" id="511145.b1769"/>
<dbReference type="TCDB" id="2.A.1.1.92">
    <property type="family name" value="the major facilitator superfamily (mfs)"/>
</dbReference>
<dbReference type="PaxDb" id="511145-b1769"/>
<dbReference type="EnsemblBacteria" id="AAC74839">
    <property type="protein sequence ID" value="AAC74839"/>
    <property type="gene ID" value="b1769"/>
</dbReference>
<dbReference type="GeneID" id="946274"/>
<dbReference type="KEGG" id="ecj:JW1758"/>
<dbReference type="KEGG" id="eco:b1769"/>
<dbReference type="KEGG" id="ecoc:C3026_10100"/>
<dbReference type="PATRIC" id="fig|1411691.4.peg.485"/>
<dbReference type="EchoBASE" id="EB2272"/>
<dbReference type="eggNOG" id="COG2814">
    <property type="taxonomic scope" value="Bacteria"/>
</dbReference>
<dbReference type="HOGENOM" id="CLU_001265_46_6_6"/>
<dbReference type="InParanoid" id="P38055"/>
<dbReference type="OMA" id="DLQWLKV"/>
<dbReference type="OrthoDB" id="9773957at2"/>
<dbReference type="PhylomeDB" id="P38055"/>
<dbReference type="BioCyc" id="EcoCyc:YDJE-MONOMER"/>
<dbReference type="PRO" id="PR:P38055"/>
<dbReference type="Proteomes" id="UP000000625">
    <property type="component" value="Chromosome"/>
</dbReference>
<dbReference type="GO" id="GO:0005886">
    <property type="term" value="C:plasma membrane"/>
    <property type="evidence" value="ECO:0000314"/>
    <property type="project" value="EcoCyc"/>
</dbReference>
<dbReference type="GO" id="GO:0022857">
    <property type="term" value="F:transmembrane transporter activity"/>
    <property type="evidence" value="ECO:0007669"/>
    <property type="project" value="InterPro"/>
</dbReference>
<dbReference type="CDD" id="cd17316">
    <property type="entry name" value="MFS_SV2_like"/>
    <property type="match status" value="1"/>
</dbReference>
<dbReference type="FunFam" id="1.20.1250.20:FF:000458">
    <property type="entry name" value="Inner membrane metabolite transport protein ydjE"/>
    <property type="match status" value="1"/>
</dbReference>
<dbReference type="Gene3D" id="1.20.1250.20">
    <property type="entry name" value="MFS general substrate transporter like domains"/>
    <property type="match status" value="1"/>
</dbReference>
<dbReference type="InterPro" id="IPR011701">
    <property type="entry name" value="MFS"/>
</dbReference>
<dbReference type="InterPro" id="IPR020846">
    <property type="entry name" value="MFS_dom"/>
</dbReference>
<dbReference type="InterPro" id="IPR036259">
    <property type="entry name" value="MFS_trans_sf"/>
</dbReference>
<dbReference type="PANTHER" id="PTHR23511">
    <property type="entry name" value="SYNAPTIC VESICLE GLYCOPROTEIN 2"/>
    <property type="match status" value="1"/>
</dbReference>
<dbReference type="PANTHER" id="PTHR23511:SF34">
    <property type="entry name" value="SYNAPTIC VESICLE GLYCOPROTEIN 2"/>
    <property type="match status" value="1"/>
</dbReference>
<dbReference type="Pfam" id="PF07690">
    <property type="entry name" value="MFS_1"/>
    <property type="match status" value="1"/>
</dbReference>
<dbReference type="SUPFAM" id="SSF103473">
    <property type="entry name" value="MFS general substrate transporter"/>
    <property type="match status" value="1"/>
</dbReference>
<dbReference type="PROSITE" id="PS50850">
    <property type="entry name" value="MFS"/>
    <property type="match status" value="1"/>
</dbReference>
<proteinExistence type="evidence at protein level"/>
<name>YDJE_ECOLI</name>
<evidence type="ECO:0000255" key="1"/>
<evidence type="ECO:0000305" key="2"/>
<protein>
    <recommendedName>
        <fullName>Inner membrane metabolite transport protein YdjE</fullName>
    </recommendedName>
</protein>
<accession>P38055</accession>
<accession>P77244</accession>